<organism>
    <name type="scientific">Homo sapiens</name>
    <name type="common">Human</name>
    <dbReference type="NCBI Taxonomy" id="9606"/>
    <lineage>
        <taxon>Eukaryota</taxon>
        <taxon>Metazoa</taxon>
        <taxon>Chordata</taxon>
        <taxon>Craniata</taxon>
        <taxon>Vertebrata</taxon>
        <taxon>Euteleostomi</taxon>
        <taxon>Mammalia</taxon>
        <taxon>Eutheria</taxon>
        <taxon>Euarchontoglires</taxon>
        <taxon>Primates</taxon>
        <taxon>Haplorrhini</taxon>
        <taxon>Catarrhini</taxon>
        <taxon>Hominidae</taxon>
        <taxon>Homo</taxon>
    </lineage>
</organism>
<accession>Q969N2</accession>
<accession>B2RND5</accession>
<accession>B7Z3N1</accession>
<accession>B7Z7I8</accession>
<accession>E1P622</accession>
<accession>G8JLF5</accession>
<accession>Q2NL69</accession>
<accession>Q7Z3N7</accession>
<accession>Q9BQY7</accession>
<accession>Q9BQY8</accession>
<accession>Q9UJG6</accession>
<accession>Q9Y2Z5</accession>
<comment type="function">
    <text evidence="2 3 10 20 21 22 23 24">Component of the glycosylphosphatidylinositol-anchor (GPI-anchor) transamidase (GPI-T) complex that catalyzes the formation of the linkage between a proprotein and a GPI-anchor and participates in GPI anchored protein biosynthesis (PubMed:11483512, PubMed:12582175, PubMed:28327575, PubMed:34576938, PubMed:35165458, PubMed:35551457, PubMed:36970549, PubMed:37684232). May play a crucial role in GPI-T complex assembly in the luminal layer (PubMed:35165458, PubMed:35551457). Binds GPI-anchor (PubMed:37684232).</text>
</comment>
<comment type="pathway">
    <text evidence="2 3 10 20 21 22 23 24">Glycolipid biosynthesis; glycosylphosphatidylinositol-anchor biosynthesis.</text>
</comment>
<comment type="subunit">
    <text evidence="2 3 20 21 22 24">Heteropentamer (PubMed:35551457). Part of the GPI-anchor transamidase complex, consisting of PIGK, PIGT, PIGS, PIGU and GAA1 (PubMed:11483512, PubMed:12582175, PubMed:34576938, PubMed:35165458, PubMed:35551457, PubMed:37684232).</text>
</comment>
<comment type="interaction">
    <interactant intactId="EBI-726383">
        <id>Q969N2</id>
    </interactant>
    <interactant intactId="EBI-720225">
        <id>O43292</id>
        <label>GPAA1</label>
    </interactant>
    <organismsDiffer>false</organismsDiffer>
    <experiments>13</experiments>
</comment>
<comment type="interaction">
    <interactant intactId="EBI-726383">
        <id>Q969N2</id>
    </interactant>
    <interactant intactId="EBI-8617711">
        <id>Q92643</id>
        <label>PIGK</label>
    </interactant>
    <organismsDiffer>false</organismsDiffer>
    <experiments>12</experiments>
</comment>
<comment type="interaction">
    <interactant intactId="EBI-726383">
        <id>Q969N2</id>
    </interactant>
    <interactant intactId="EBI-2908273">
        <id>Q96S52</id>
        <label>PIGS</label>
    </interactant>
    <organismsDiffer>false</organismsDiffer>
    <experiments>13</experiments>
</comment>
<comment type="subcellular location">
    <subcellularLocation>
        <location evidence="29 30">Endoplasmic reticulum membrane</location>
        <topology evidence="21 22">Single-pass type I membrane protein</topology>
    </subcellularLocation>
</comment>
<comment type="alternative products">
    <event type="alternative splicing"/>
    <isoform>
        <id>Q969N2-1</id>
        <name>1</name>
        <sequence type="displayed"/>
    </isoform>
    <isoform>
        <id>Q969N2-2</id>
        <name>2</name>
        <sequence type="described" ref="VSP_009537"/>
    </isoform>
    <isoform>
        <id>Q969N2-3</id>
        <name>3</name>
        <sequence type="described" ref="VSP_009536 VSP_009539 VSP_009540"/>
    </isoform>
    <isoform>
        <id>Q969N2-4</id>
        <name>4</name>
        <sequence type="described" ref="VSP_009538"/>
    </isoform>
    <isoform>
        <id>Q969N2-5</id>
        <name>5</name>
        <sequence type="described" ref="VSP_043167"/>
    </isoform>
    <isoform>
        <id>Q969N2-6</id>
        <name>6</name>
        <sequence type="described" ref="VSP_009540"/>
    </isoform>
</comment>
<comment type="PTM">
    <text evidence="3 22">The disulfide bond between PIGK/GPI8 and PIGT is important for normal enzyme activity.</text>
</comment>
<comment type="disease" evidence="5 7 8 9 10 11 12 13 14 15 16 17 18 19 23">
    <disease id="DI-03879">
        <name>Multiple congenital anomalies-hypotonia-seizures syndrome 3</name>
        <acronym>MCAHS3</acronym>
        <description>An autosomal recessive syndrome characterized by distinct facial features, intellectual disability, hypotonia and seizures, in combination with abnormal skeletal, endocrine, and ophthalmologic findings including impaired vision, as well as abnormal motility of the eyes.</description>
        <dbReference type="MIM" id="615398"/>
    </disease>
    <text>The disease is caused by variants affecting the gene represented in this entry.</text>
</comment>
<comment type="disease" evidence="6">
    <disease id="DI-03876">
        <name>Paroxysmal nocturnal hemoglobinuria 2</name>
        <acronym>PNH2</acronym>
        <description>A disorder characterized by hemolytic anemia with hemoglobinuria, thromboses in large vessels, and a deficiency in hematopoiesis. Red blood cell breakdown with release of hemoglobin into the urine is manifested most prominently by dark-colored urine in the morning.</description>
        <dbReference type="MIM" id="615399"/>
    </disease>
    <text>Disease susceptibility is associated with variants affecting the gene represented in this entry.</text>
</comment>
<comment type="miscellaneous">
    <molecule>Isoform 3</molecule>
    <text evidence="28">May be due to intron retention.</text>
</comment>
<comment type="similarity">
    <text evidence="28">Belongs to the PIGT family.</text>
</comment>
<comment type="sequence caution" evidence="28">
    <conflict type="frameshift">
        <sequence resource="EMBL-CDS" id="AAD27715"/>
    </conflict>
</comment>
<comment type="sequence caution" evidence="28">
    <conflict type="erroneous initiation">
        <sequence resource="EMBL-CDS" id="AAQ88951"/>
    </conflict>
    <text>Truncated N-terminus.</text>
</comment>
<comment type="sequence caution" evidence="28">
    <conflict type="erroneous initiation">
        <sequence resource="EMBL-CDS" id="CAB57341"/>
    </conflict>
    <text>Truncated N-terminus.</text>
</comment>
<reference key="1">
    <citation type="journal article" date="2001" name="EMBO J.">
        <title>PIG-S and PIG-T, essential for GPI anchor attachment to proteins, form a complex with GAA1 and GPI8.</title>
        <authorList>
            <person name="Ohishi K."/>
            <person name="Inoue N."/>
            <person name="Kinoshita T."/>
        </authorList>
    </citation>
    <scope>NUCLEOTIDE SEQUENCE [MRNA] (ISOFORM 1)</scope>
    <scope>PROTEIN SEQUENCE OF 22-41</scope>
    <scope>FUNCTION</scope>
    <scope>PATHWAY</scope>
    <scope>SUBUNIT</scope>
</reference>
<reference key="2">
    <citation type="journal article" date="2004" name="Nat. Genet.">
        <title>Complete sequencing and characterization of 21,243 full-length human cDNAs.</title>
        <authorList>
            <person name="Ota T."/>
            <person name="Suzuki Y."/>
            <person name="Nishikawa T."/>
            <person name="Otsuki T."/>
            <person name="Sugiyama T."/>
            <person name="Irie R."/>
            <person name="Wakamatsu A."/>
            <person name="Hayashi K."/>
            <person name="Sato H."/>
            <person name="Nagai K."/>
            <person name="Kimura K."/>
            <person name="Makita H."/>
            <person name="Sekine M."/>
            <person name="Obayashi M."/>
            <person name="Nishi T."/>
            <person name="Shibahara T."/>
            <person name="Tanaka T."/>
            <person name="Ishii S."/>
            <person name="Yamamoto J."/>
            <person name="Saito K."/>
            <person name="Kawai Y."/>
            <person name="Isono Y."/>
            <person name="Nakamura Y."/>
            <person name="Nagahari K."/>
            <person name="Murakami K."/>
            <person name="Yasuda T."/>
            <person name="Iwayanagi T."/>
            <person name="Wagatsuma M."/>
            <person name="Shiratori A."/>
            <person name="Sudo H."/>
            <person name="Hosoiri T."/>
            <person name="Kaku Y."/>
            <person name="Kodaira H."/>
            <person name="Kondo H."/>
            <person name="Sugawara M."/>
            <person name="Takahashi M."/>
            <person name="Kanda K."/>
            <person name="Yokoi T."/>
            <person name="Furuya T."/>
            <person name="Kikkawa E."/>
            <person name="Omura Y."/>
            <person name="Abe K."/>
            <person name="Kamihara K."/>
            <person name="Katsuta N."/>
            <person name="Sato K."/>
            <person name="Tanikawa M."/>
            <person name="Yamazaki M."/>
            <person name="Ninomiya K."/>
            <person name="Ishibashi T."/>
            <person name="Yamashita H."/>
            <person name="Murakawa K."/>
            <person name="Fujimori K."/>
            <person name="Tanai H."/>
            <person name="Kimata M."/>
            <person name="Watanabe M."/>
            <person name="Hiraoka S."/>
            <person name="Chiba Y."/>
            <person name="Ishida S."/>
            <person name="Ono Y."/>
            <person name="Takiguchi S."/>
            <person name="Watanabe S."/>
            <person name="Yosida M."/>
            <person name="Hotuta T."/>
            <person name="Kusano J."/>
            <person name="Kanehori K."/>
            <person name="Takahashi-Fujii A."/>
            <person name="Hara H."/>
            <person name="Tanase T.-O."/>
            <person name="Nomura Y."/>
            <person name="Togiya S."/>
            <person name="Komai F."/>
            <person name="Hara R."/>
            <person name="Takeuchi K."/>
            <person name="Arita M."/>
            <person name="Imose N."/>
            <person name="Musashino K."/>
            <person name="Yuuki H."/>
            <person name="Oshima A."/>
            <person name="Sasaki N."/>
            <person name="Aotsuka S."/>
            <person name="Yoshikawa Y."/>
            <person name="Matsunawa H."/>
            <person name="Ichihara T."/>
            <person name="Shiohata N."/>
            <person name="Sano S."/>
            <person name="Moriya S."/>
            <person name="Momiyama H."/>
            <person name="Satoh N."/>
            <person name="Takami S."/>
            <person name="Terashima Y."/>
            <person name="Suzuki O."/>
            <person name="Nakagawa S."/>
            <person name="Senoh A."/>
            <person name="Mizoguchi H."/>
            <person name="Goto Y."/>
            <person name="Shimizu F."/>
            <person name="Wakebe H."/>
            <person name="Hishigaki H."/>
            <person name="Watanabe T."/>
            <person name="Sugiyama A."/>
            <person name="Takemoto M."/>
            <person name="Kawakami B."/>
            <person name="Yamazaki M."/>
            <person name="Watanabe K."/>
            <person name="Kumagai A."/>
            <person name="Itakura S."/>
            <person name="Fukuzumi Y."/>
            <person name="Fujimori Y."/>
            <person name="Komiyama M."/>
            <person name="Tashiro H."/>
            <person name="Tanigami A."/>
            <person name="Fujiwara T."/>
            <person name="Ono T."/>
            <person name="Yamada K."/>
            <person name="Fujii Y."/>
            <person name="Ozaki K."/>
            <person name="Hirao M."/>
            <person name="Ohmori Y."/>
            <person name="Kawabata A."/>
            <person name="Hikiji T."/>
            <person name="Kobatake N."/>
            <person name="Inagaki H."/>
            <person name="Ikema Y."/>
            <person name="Okamoto S."/>
            <person name="Okitani R."/>
            <person name="Kawakami T."/>
            <person name="Noguchi S."/>
            <person name="Itoh T."/>
            <person name="Shigeta K."/>
            <person name="Senba T."/>
            <person name="Matsumura K."/>
            <person name="Nakajima Y."/>
            <person name="Mizuno T."/>
            <person name="Morinaga M."/>
            <person name="Sasaki M."/>
            <person name="Togashi T."/>
            <person name="Oyama M."/>
            <person name="Hata H."/>
            <person name="Watanabe M."/>
            <person name="Komatsu T."/>
            <person name="Mizushima-Sugano J."/>
            <person name="Satoh T."/>
            <person name="Shirai Y."/>
            <person name="Takahashi Y."/>
            <person name="Nakagawa K."/>
            <person name="Okumura K."/>
            <person name="Nagase T."/>
            <person name="Nomura N."/>
            <person name="Kikuchi H."/>
            <person name="Masuho Y."/>
            <person name="Yamashita R."/>
            <person name="Nakai K."/>
            <person name="Yada T."/>
            <person name="Nakamura Y."/>
            <person name="Ohara O."/>
            <person name="Isogai T."/>
            <person name="Sugano S."/>
        </authorList>
    </citation>
    <scope>NUCLEOTIDE SEQUENCE [LARGE SCALE MRNA] (ISOFORMS 4 AND 5)</scope>
    <source>
        <tissue>Testis</tissue>
        <tissue>Thalamus</tissue>
    </source>
</reference>
<reference key="3">
    <citation type="journal article" date="2005" name="DNA Res.">
        <title>Signal sequence and keyword trap in silico for selection of full-length human cDNAs encoding secretion or membrane proteins from oligo-capped cDNA libraries.</title>
        <authorList>
            <person name="Otsuki T."/>
            <person name="Ota T."/>
            <person name="Nishikawa T."/>
            <person name="Hayashi K."/>
            <person name="Suzuki Y."/>
            <person name="Yamamoto J."/>
            <person name="Wakamatsu A."/>
            <person name="Kimura K."/>
            <person name="Sakamoto K."/>
            <person name="Hatano N."/>
            <person name="Kawai Y."/>
            <person name="Ishii S."/>
            <person name="Saito K."/>
            <person name="Kojima S."/>
            <person name="Sugiyama T."/>
            <person name="Ono T."/>
            <person name="Okano K."/>
            <person name="Yoshikawa Y."/>
            <person name="Aotsuka S."/>
            <person name="Sasaki N."/>
            <person name="Hattori A."/>
            <person name="Okumura K."/>
            <person name="Nagai K."/>
            <person name="Sugano S."/>
            <person name="Isogai T."/>
        </authorList>
    </citation>
    <scope>NUCLEOTIDE SEQUENCE [LARGE SCALE MRNA] (ISOFORM 1)</scope>
    <source>
        <tissue>Placenta</tissue>
    </source>
</reference>
<reference key="4">
    <citation type="submission" date="2006-07" db="EMBL/GenBank/DDBJ databases">
        <title>Homo sapiens protein coding cDNA.</title>
        <authorList>
            <person name="Suzuki Y."/>
            <person name="Sugano S."/>
            <person name="Totoki Y."/>
            <person name="Toyoda A."/>
            <person name="Takeda T."/>
            <person name="Sakaki Y."/>
            <person name="Tanaka A."/>
            <person name="Yokoyama S."/>
        </authorList>
    </citation>
    <scope>NUCLEOTIDE SEQUENCE [LARGE SCALE MRNA] (ISOFORM 6)</scope>
    <source>
        <tissue>Signet-ring cell carcinoma</tissue>
    </source>
</reference>
<reference key="5">
    <citation type="journal article" date="2007" name="BMC Genomics">
        <title>The full-ORF clone resource of the German cDNA consortium.</title>
        <authorList>
            <person name="Bechtel S."/>
            <person name="Rosenfelder H."/>
            <person name="Duda A."/>
            <person name="Schmidt C.P."/>
            <person name="Ernst U."/>
            <person name="Wellenreuther R."/>
            <person name="Mehrle A."/>
            <person name="Schuster C."/>
            <person name="Bahr A."/>
            <person name="Bloecker H."/>
            <person name="Heubner D."/>
            <person name="Hoerlein A."/>
            <person name="Michel G."/>
            <person name="Wedler H."/>
            <person name="Koehrer K."/>
            <person name="Ottenwaelder B."/>
            <person name="Poustka A."/>
            <person name="Wiemann S."/>
            <person name="Schupp I."/>
        </authorList>
    </citation>
    <scope>NUCLEOTIDE SEQUENCE [LARGE SCALE MRNA] (ISOFORM 3)</scope>
    <source>
        <tissue>Amygdala</tissue>
    </source>
</reference>
<reference key="6">
    <citation type="journal article" date="2001" name="Nature">
        <title>The DNA sequence and comparative analysis of human chromosome 20.</title>
        <authorList>
            <person name="Deloukas P."/>
            <person name="Matthews L.H."/>
            <person name="Ashurst J.L."/>
            <person name="Burton J."/>
            <person name="Gilbert J.G.R."/>
            <person name="Jones M."/>
            <person name="Stavrides G."/>
            <person name="Almeida J.P."/>
            <person name="Babbage A.K."/>
            <person name="Bagguley C.L."/>
            <person name="Bailey J."/>
            <person name="Barlow K.F."/>
            <person name="Bates K.N."/>
            <person name="Beard L.M."/>
            <person name="Beare D.M."/>
            <person name="Beasley O.P."/>
            <person name="Bird C.P."/>
            <person name="Blakey S.E."/>
            <person name="Bridgeman A.M."/>
            <person name="Brown A.J."/>
            <person name="Buck D."/>
            <person name="Burrill W.D."/>
            <person name="Butler A.P."/>
            <person name="Carder C."/>
            <person name="Carter N.P."/>
            <person name="Chapman J.C."/>
            <person name="Clamp M."/>
            <person name="Clark G."/>
            <person name="Clark L.N."/>
            <person name="Clark S.Y."/>
            <person name="Clee C.M."/>
            <person name="Clegg S."/>
            <person name="Cobley V.E."/>
            <person name="Collier R.E."/>
            <person name="Connor R.E."/>
            <person name="Corby N.R."/>
            <person name="Coulson A."/>
            <person name="Coville G.J."/>
            <person name="Deadman R."/>
            <person name="Dhami P.D."/>
            <person name="Dunn M."/>
            <person name="Ellington A.G."/>
            <person name="Frankland J.A."/>
            <person name="Fraser A."/>
            <person name="French L."/>
            <person name="Garner P."/>
            <person name="Grafham D.V."/>
            <person name="Griffiths C."/>
            <person name="Griffiths M.N.D."/>
            <person name="Gwilliam R."/>
            <person name="Hall R.E."/>
            <person name="Hammond S."/>
            <person name="Harley J.L."/>
            <person name="Heath P.D."/>
            <person name="Ho S."/>
            <person name="Holden J.L."/>
            <person name="Howden P.J."/>
            <person name="Huckle E."/>
            <person name="Hunt A.R."/>
            <person name="Hunt S.E."/>
            <person name="Jekosch K."/>
            <person name="Johnson C.M."/>
            <person name="Johnson D."/>
            <person name="Kay M.P."/>
            <person name="Kimberley A.M."/>
            <person name="King A."/>
            <person name="Knights A."/>
            <person name="Laird G.K."/>
            <person name="Lawlor S."/>
            <person name="Lehvaeslaiho M.H."/>
            <person name="Leversha M.A."/>
            <person name="Lloyd C."/>
            <person name="Lloyd D.M."/>
            <person name="Lovell J.D."/>
            <person name="Marsh V.L."/>
            <person name="Martin S.L."/>
            <person name="McConnachie L.J."/>
            <person name="McLay K."/>
            <person name="McMurray A.A."/>
            <person name="Milne S.A."/>
            <person name="Mistry D."/>
            <person name="Moore M.J.F."/>
            <person name="Mullikin J.C."/>
            <person name="Nickerson T."/>
            <person name="Oliver K."/>
            <person name="Parker A."/>
            <person name="Patel R."/>
            <person name="Pearce T.A.V."/>
            <person name="Peck A.I."/>
            <person name="Phillimore B.J.C.T."/>
            <person name="Prathalingam S.R."/>
            <person name="Plumb R.W."/>
            <person name="Ramsay H."/>
            <person name="Rice C.M."/>
            <person name="Ross M.T."/>
            <person name="Scott C.E."/>
            <person name="Sehra H.K."/>
            <person name="Shownkeen R."/>
            <person name="Sims S."/>
            <person name="Skuce C.D."/>
            <person name="Smith M.L."/>
            <person name="Soderlund C."/>
            <person name="Steward C.A."/>
            <person name="Sulston J.E."/>
            <person name="Swann R.M."/>
            <person name="Sycamore N."/>
            <person name="Taylor R."/>
            <person name="Tee L."/>
            <person name="Thomas D.W."/>
            <person name="Thorpe A."/>
            <person name="Tracey A."/>
            <person name="Tromans A.C."/>
            <person name="Vaudin M."/>
            <person name="Wall M."/>
            <person name="Wallis J.M."/>
            <person name="Whitehead S.L."/>
            <person name="Whittaker P."/>
            <person name="Willey D.L."/>
            <person name="Williams L."/>
            <person name="Williams S.A."/>
            <person name="Wilming L."/>
            <person name="Wray P.W."/>
            <person name="Hubbard T."/>
            <person name="Durbin R.M."/>
            <person name="Bentley D.R."/>
            <person name="Beck S."/>
            <person name="Rogers J."/>
        </authorList>
    </citation>
    <scope>NUCLEOTIDE SEQUENCE [LARGE SCALE GENOMIC DNA]</scope>
</reference>
<reference key="7">
    <citation type="submission" date="2005-09" db="EMBL/GenBank/DDBJ databases">
        <authorList>
            <person name="Mural R.J."/>
            <person name="Istrail S."/>
            <person name="Sutton G.G."/>
            <person name="Florea L."/>
            <person name="Halpern A.L."/>
            <person name="Mobarry C.M."/>
            <person name="Lippert R."/>
            <person name="Walenz B."/>
            <person name="Shatkay H."/>
            <person name="Dew I."/>
            <person name="Miller J.R."/>
            <person name="Flanigan M.J."/>
            <person name="Edwards N.J."/>
            <person name="Bolanos R."/>
            <person name="Fasulo D."/>
            <person name="Halldorsson B.V."/>
            <person name="Hannenhalli S."/>
            <person name="Turner R."/>
            <person name="Yooseph S."/>
            <person name="Lu F."/>
            <person name="Nusskern D.R."/>
            <person name="Shue B.C."/>
            <person name="Zheng X.H."/>
            <person name="Zhong F."/>
            <person name="Delcher A.L."/>
            <person name="Huson D.H."/>
            <person name="Kravitz S.A."/>
            <person name="Mouchard L."/>
            <person name="Reinert K."/>
            <person name="Remington K.A."/>
            <person name="Clark A.G."/>
            <person name="Waterman M.S."/>
            <person name="Eichler E.E."/>
            <person name="Adams M.D."/>
            <person name="Hunkapiller M.W."/>
            <person name="Myers E.W."/>
            <person name="Venter J.C."/>
        </authorList>
    </citation>
    <scope>NUCLEOTIDE SEQUENCE [LARGE SCALE GENOMIC DNA]</scope>
</reference>
<reference key="8">
    <citation type="journal article" date="2004" name="Genome Res.">
        <title>The status, quality, and expansion of the NIH full-length cDNA project: the Mammalian Gene Collection (MGC).</title>
        <authorList>
            <consortium name="The MGC Project Team"/>
        </authorList>
    </citation>
    <scope>NUCLEOTIDE SEQUENCE [LARGE SCALE MRNA] (ISOFORM 1)</scope>
    <source>
        <tissue>Brain</tissue>
        <tissue>Leukocyte</tissue>
        <tissue>Skin</tissue>
        <tissue>Testis</tissue>
    </source>
</reference>
<reference key="9">
    <citation type="journal article" date="2003" name="Genome Res.">
        <title>The secreted protein discovery initiative (SPDI), a large-scale effort to identify novel human secreted and transmembrane proteins: a bioinformatics assessment.</title>
        <authorList>
            <person name="Clark H.F."/>
            <person name="Gurney A.L."/>
            <person name="Abaya E."/>
            <person name="Baker K."/>
            <person name="Baldwin D.T."/>
            <person name="Brush J."/>
            <person name="Chen J."/>
            <person name="Chow B."/>
            <person name="Chui C."/>
            <person name="Crowley C."/>
            <person name="Currell B."/>
            <person name="Deuel B."/>
            <person name="Dowd P."/>
            <person name="Eaton D."/>
            <person name="Foster J.S."/>
            <person name="Grimaldi C."/>
            <person name="Gu Q."/>
            <person name="Hass P.E."/>
            <person name="Heldens S."/>
            <person name="Huang A."/>
            <person name="Kim H.S."/>
            <person name="Klimowski L."/>
            <person name="Jin Y."/>
            <person name="Johnson S."/>
            <person name="Lee J."/>
            <person name="Lewis L."/>
            <person name="Liao D."/>
            <person name="Mark M.R."/>
            <person name="Robbie E."/>
            <person name="Sanchez C."/>
            <person name="Schoenfeld J."/>
            <person name="Seshagiri S."/>
            <person name="Simmons L."/>
            <person name="Singh J."/>
            <person name="Smith V."/>
            <person name="Stinson J."/>
            <person name="Vagts A."/>
            <person name="Vandlen R.L."/>
            <person name="Watanabe C."/>
            <person name="Wieand D."/>
            <person name="Woods K."/>
            <person name="Xie M.-H."/>
            <person name="Yansura D.G."/>
            <person name="Yi S."/>
            <person name="Yu G."/>
            <person name="Yuan J."/>
            <person name="Zhang M."/>
            <person name="Zhang Z."/>
            <person name="Goddard A.D."/>
            <person name="Wood W.I."/>
            <person name="Godowski P.J."/>
            <person name="Gray A.M."/>
        </authorList>
    </citation>
    <scope>NUCLEOTIDE SEQUENCE [LARGE SCALE MRNA] OF 2-578 (ISOFORM 1)</scope>
</reference>
<reference key="10">
    <citation type="journal article" date="2000" name="Genome Res.">
        <title>Identification of novel human genes evolutionarily conserved in Caenorhabditis elegans by comparative proteomics.</title>
        <authorList>
            <person name="Lai C.-H."/>
            <person name="Chou C.-Y."/>
            <person name="Ch'ang L.-Y."/>
            <person name="Liu C.-S."/>
            <person name="Lin W.-C."/>
        </authorList>
    </citation>
    <scope>NUCLEOTIDE SEQUENCE [LARGE SCALE MRNA] OF 3-578 (ISOFORM 1)</scope>
</reference>
<reference key="11">
    <citation type="journal article" date="2003" name="J. Biol. Chem.">
        <title>Two subunits of glycosylphosphatidylinositol transamidase, GPI8 and PIG-T, form a functionally important intermolecular disulfide bridge.</title>
        <authorList>
            <person name="Ohishi K."/>
            <person name="Nagamune K."/>
            <person name="Maeda Y."/>
            <person name="Kinoshita T."/>
        </authorList>
    </citation>
    <scope>FUNCTION</scope>
    <scope>PATHWAY</scope>
    <scope>SUBUNIT</scope>
    <scope>DISULFIDE BOND FORMATION WITH PIGK/GPI8</scope>
    <scope>MUTAGENESIS OF CYS-182</scope>
</reference>
<reference key="12">
    <citation type="journal article" date="2009" name="J. Proteome Res.">
        <title>Glycoproteomics analysis of human liver tissue by combination of multiple enzyme digestion and hydrazide chemistry.</title>
        <authorList>
            <person name="Chen R."/>
            <person name="Jiang X."/>
            <person name="Sun D."/>
            <person name="Han G."/>
            <person name="Wang F."/>
            <person name="Ye M."/>
            <person name="Wang L."/>
            <person name="Zou H."/>
        </authorList>
    </citation>
    <scope>GLYCOSYLATION [LARGE SCALE ANALYSIS] AT ASN-164</scope>
    <source>
        <tissue>Liver</tissue>
    </source>
</reference>
<reference key="13">
    <citation type="journal article" date="2011" name="BMC Syst. Biol.">
        <title>Initial characterization of the human central proteome.</title>
        <authorList>
            <person name="Burkard T.R."/>
            <person name="Planyavsky M."/>
            <person name="Kaupe I."/>
            <person name="Breitwieser F.P."/>
            <person name="Buerckstuemmer T."/>
            <person name="Bennett K.L."/>
            <person name="Superti-Furga G."/>
            <person name="Colinge J."/>
        </authorList>
    </citation>
    <scope>IDENTIFICATION BY MASS SPECTROMETRY [LARGE SCALE ANALYSIS]</scope>
</reference>
<reference key="14">
    <citation type="journal article" date="2013" name="Blood">
        <title>A case of paroxysmal nocturnal hemoglobinuria caused by a germline mutation and a somatic mutation in PIGT.</title>
        <authorList>
            <person name="Krawitz P.M."/>
            <person name="Hochsmann B."/>
            <person name="Murakami Y."/>
            <person name="Teubner B."/>
            <person name="Kruger U."/>
            <person name="Klopocki E."/>
            <person name="Neitzel H."/>
            <person name="Hoellein A."/>
            <person name="Schneider C."/>
            <person name="Parkhomchuk D."/>
            <person name="Hecht J."/>
            <person name="Robinson P.N."/>
            <person name="Mundlos S."/>
            <person name="Kinoshita T."/>
            <person name="Schrezenmeier H."/>
        </authorList>
    </citation>
    <scope>INVOLVEMENT IN PNH2</scope>
</reference>
<reference key="15">
    <citation type="journal article" date="2015" name="Proteomics">
        <title>N-terminome analysis of the human mitochondrial proteome.</title>
        <authorList>
            <person name="Vaca Jacome A.S."/>
            <person name="Rabilloud T."/>
            <person name="Schaeffer-Reiss C."/>
            <person name="Rompais M."/>
            <person name="Ayoub D."/>
            <person name="Lane L."/>
            <person name="Bairoch A."/>
            <person name="Van Dorsselaer A."/>
            <person name="Carapito C."/>
        </authorList>
    </citation>
    <scope>IDENTIFICATION BY MASS SPECTROMETRY [LARGE SCALE ANALYSIS]</scope>
</reference>
<reference key="16">
    <citation type="journal article" date="2021" name="Molecules">
        <title>Functional analysis of the GPI transamidase complex by screening for amino acid mutations in each subunit.</title>
        <authorList>
            <person name="Liu S.S."/>
            <person name="Jin F."/>
            <person name="Liu Y.S."/>
            <person name="Murakami Y."/>
            <person name="Sugita Y."/>
            <person name="Kato T."/>
            <person name="Gao X.D."/>
            <person name="Kinoshita T."/>
            <person name="Hattori M."/>
            <person name="Fujita M."/>
        </authorList>
    </citation>
    <scope>MUTAGENESIS OF PRO-38; GLY-92; GLU-129; 135-SER-GLY-136; CYS-139; ASP-146; ASN-164; CYS-182; GLU-184; 190-LYS-LYS-191; ASN-291; ASN-327; TYR-396; GLU-429; GLU-455; ASP-459 AND 528-VAL-ILE-529</scope>
    <scope>FUNCTION</scope>
    <scope>PATHWAY</scope>
    <scope>IDENTIFICATION OF THE GPI-ANCHOR TRANSAMIDASE COMPLEX</scope>
</reference>
<reference evidence="33" key="17">
    <citation type="journal article" date="2022" name="Nat. Commun.">
        <title>Molecular insights into biogenesis of glycosylphosphatidylinositol anchor proteins.</title>
        <authorList>
            <person name="Xu Y."/>
            <person name="Jia G."/>
            <person name="Li T."/>
            <person name="Zhou Z."/>
            <person name="Luo Y."/>
            <person name="Chao Y."/>
            <person name="Bao J."/>
            <person name="Su Z."/>
            <person name="Qu Q."/>
            <person name="Li D."/>
        </authorList>
    </citation>
    <scope>STRUCTURE BY ELECTRON MICROSCOPY (2.53 ANGSTROMS) OF 2-578 IN COMPLEX WITH GPI-ANCHOR; GPAA1; PIGS; PIGU AND PIGK</scope>
    <scope>FUNCTION</scope>
    <scope>PATHWAY</scope>
    <scope>IDENTIFICATION OF THE GPI-ANCHOR TRANSAMIDASE COMPLEX</scope>
    <scope>SUBUNIT</scope>
    <scope>TOPOLOGY</scope>
    <scope>DISULFIDE BONDS</scope>
    <scope>SUBCELLULAR LOCATION</scope>
    <scope>DISULFIDE BOND</scope>
    <scope>MUTAGENESIS OF ASP-521 AND SER-523</scope>
</reference>
<reference evidence="32" key="18">
    <citation type="journal article" date="2022" name="Nat. Struct. Mol. Biol.">
        <title>Structure of human glycosylphosphatidylinositol transamidase.</title>
        <authorList>
            <person name="Zhang H."/>
            <person name="Su J."/>
            <person name="Li B."/>
            <person name="Gao Y."/>
            <person name="Liu M."/>
            <person name="He L."/>
            <person name="Xu H."/>
            <person name="Dong Y."/>
            <person name="Zhang X.C."/>
            <person name="Zhao Y."/>
        </authorList>
    </citation>
    <scope>STRUCTURE BY ELECTRON MICROSCOPY (3.10 ANGSTROMS) OF 27-552IN COMPLEX WITH GPI-ANCHOR; GPAA1; PIGS; PIGU AND PIGK</scope>
    <scope>IDENTIFICATION OF THE GPI-ANCHOR TRANSAMIDASE COMPLEX</scope>
    <scope>FUNCTION</scope>
    <scope>PATHWAY</scope>
    <scope>TOPOLOGY</scope>
    <scope>SUBCELLULAR LOCATION</scope>
    <scope>DISULFIDE BONDS</scope>
</reference>
<reference evidence="34 35" key="19">
    <citation type="journal article" date="2023" name="Nat. Commun.">
        <title>Structures of liganded glycosylphosphatidylinositol transamidase illuminate GPI-AP biogenesis.</title>
        <authorList>
            <person name="Xu Y."/>
            <person name="Li T."/>
            <person name="Zhou Z."/>
            <person name="Hong J."/>
            <person name="Chao Y."/>
            <person name="Zhu Z."/>
            <person name="Zhang Y."/>
            <person name="Qu Q."/>
            <person name="Li D."/>
        </authorList>
    </citation>
    <scope>STRUCTURE BY ELECTRON MICROSCOPY (2.85 ANGSTROMS) OF 2-578 IN COMPLEX WITH GPI-ANCHOR; ULBP2; GPAA1; PIGU; PIGS AND PIGK</scope>
    <scope>FUNCTION</scope>
    <scope>PATHWAY</scope>
    <scope>IDENTIFICATION OF THE GPI-ANCHOR TRANSAMIDASE COMPLEX</scope>
    <scope>DISULFIDE BONDS</scope>
    <scope>GLYCOSYLATION AT ASN-327</scope>
</reference>
<reference key="20">
    <citation type="journal article" date="2013" name="J. Med. Genet.">
        <title>A novel intellectual disability syndrome caused by GPI anchor deficiency due to homozygous mutations in PIGT.</title>
        <authorList>
            <person name="Kvarnung M."/>
            <person name="Nilsson D."/>
            <person name="Lindstrand A."/>
            <person name="Korenke G.C."/>
            <person name="Chiang S.C."/>
            <person name="Blennow E."/>
            <person name="Bergmann M."/>
            <person name="Stodberg T."/>
            <person name="Makitie O."/>
            <person name="Anderlid B.M."/>
            <person name="Bryceson Y.T."/>
            <person name="Nordenskjold M."/>
            <person name="Nordgren A."/>
        </authorList>
    </citation>
    <scope>VARIANT MCAHS3 PRO-183</scope>
    <scope>INVOLVEMENT IN MCAHS3</scope>
</reference>
<reference key="21">
    <citation type="journal article" date="2014" name="Neurogenetics">
        <title>Novel compound heterozygous PIGT mutations caused multiple congenital anomalies-hypotonia-seizures syndrome 3.</title>
        <authorList>
            <person name="Nakashima M."/>
            <person name="Kashii H."/>
            <person name="Murakami Y."/>
            <person name="Kato M."/>
            <person name="Tsurusaki Y."/>
            <person name="Miyake N."/>
            <person name="Kubota M."/>
            <person name="Kinoshita T."/>
            <person name="Saitsu H."/>
            <person name="Matsumoto N."/>
        </authorList>
    </citation>
    <scope>VARIANTS MCAHS3 84-GLU--LEU-578 DEL AND TRP-448</scope>
    <scope>INVOLVEMENT IN MCAHS3</scope>
    <scope>CHARACTERIZATION OF VARIANTS MCAHS3 84-GLU--LEU-578 DEL AND TRP-448</scope>
</reference>
<reference key="22">
    <citation type="journal article" date="2015" name="Mol. Genet. Metab.">
        <title>Expanding the clinical and molecular characteristics of PIGT-CDG, a disorder of glycosylphosphatidylinositol anchors.</title>
        <authorList>
            <person name="Lam C."/>
            <person name="Golas G.A."/>
            <person name="Davids M."/>
            <person name="Huizing M."/>
            <person name="Kane M.S."/>
            <person name="Krasnewich D.M."/>
            <person name="Malicdan M.C.V."/>
            <person name="Adams D.R."/>
            <person name="Markello T.C."/>
            <person name="Zein W.M."/>
            <person name="Gropman A.L."/>
            <person name="Lodish M.B."/>
            <person name="Stratakis C.A."/>
            <person name="Maric I."/>
            <person name="Rosenzweig S.D."/>
            <person name="Baker E.H."/>
            <person name="Ferreira C.R."/>
            <person name="Danylchuk N.R."/>
            <person name="Kahler S."/>
            <person name="Garnica A.D."/>
            <person name="Bradley Schaefer G."/>
            <person name="Boerkoel C.F."/>
            <person name="Gahl W.A."/>
            <person name="Wolfe L.A."/>
        </authorList>
    </citation>
    <scope>VARIANT MCAHS3 TRP-448</scope>
</reference>
<reference key="23">
    <citation type="journal article" date="2016" name="Genes (Basel)">
        <title>Novel PIGT Variant in Two Brothers: Expansion of the Multiple Congenital Anomalies-Hypotonia Seizures Syndrome 3 Phenotype.</title>
        <authorList>
            <person name="Skauli N."/>
            <person name="Wallace S."/>
            <person name="Chiang S.C."/>
            <person name="Baroey T."/>
            <person name="Holmgren A."/>
            <person name="Stray-Pedersen A."/>
            <person name="Bryceson Y.T."/>
            <person name="Stroemme P."/>
            <person name="Frengen E."/>
            <person name="Misceo D."/>
        </authorList>
    </citation>
    <scope>VARIANT MCAHS3 VAL-360</scope>
    <scope>CHARACTERIZATION OF VARIANT MCAHS3 VAL-360</scope>
</reference>
<reference key="24">
    <citation type="journal article" date="2017" name="Eur. J. Hum. Genet.">
        <title>Analysis of exome data for 4293 trios suggests GPI-anchor biogenesis defects are a rare cause of developmental disorders.</title>
        <authorList>
            <consortium name="DDD Study"/>
            <person name="Pagnamenta A.T."/>
            <person name="Murakami Y."/>
            <person name="Taylor J.M."/>
            <person name="Anzilotti C."/>
            <person name="Howard M.F."/>
            <person name="Miller V."/>
            <person name="Johnson D.S."/>
            <person name="Tadros S."/>
            <person name="Mansour S."/>
            <person name="Temple I.K."/>
            <person name="Firth R."/>
            <person name="Rosser E."/>
            <person name="Harrison R.E."/>
            <person name="Kerr B."/>
            <person name="Popitsch N."/>
            <person name="Kinoshita T."/>
            <person name="Taylor J.C."/>
            <person name="Kini U."/>
        </authorList>
    </citation>
    <scope>VARIANTS MCAHS3 GLN-237 AND MET-528</scope>
    <scope>CHARACTERIZATION OF VARIANTS MCAHS3 GLN-237 AND MET-528</scope>
    <scope>FUNCTION</scope>
    <scope>PATHWAY</scope>
</reference>
<reference key="25">
    <citation type="journal article" date="2018" name="Brain Dev.">
        <title>Epileptic apnea in a patient with inherited glycosylphosphatidylinositol anchor deficiency and PIGT mutations.</title>
        <authorList>
            <person name="Kohashi K."/>
            <person name="Ishiyama A."/>
            <person name="Yuasa S."/>
            <person name="Tanaka T."/>
            <person name="Miya K."/>
            <person name="Adachi Y."/>
            <person name="Sato N."/>
            <person name="Saitsu H."/>
            <person name="Ohba C."/>
            <person name="Matsumoto N."/>
            <person name="Murakami Y."/>
            <person name="Kinoshita T."/>
            <person name="Sugai K."/>
            <person name="Sasaki M."/>
        </authorList>
    </citation>
    <scope>VARIANTS MCAHS3 84-GLU--LEU-578 DEL AND TRP-366</scope>
</reference>
<reference key="26">
    <citation type="journal article" date="2018" name="Front. Genet.">
        <title>Homozygous PIGT Mutation Lead to Multiple Congenital Anomalies-Hypotonia Seizures Syndrome 3.</title>
        <authorList>
            <person name="Yang L."/>
            <person name="Peng J."/>
            <person name="Yin X.M."/>
            <person name="Pang N."/>
            <person name="Chen C."/>
            <person name="Wu T.H."/>
            <person name="Zou X.M."/>
            <person name="Yin F."/>
        </authorList>
    </citation>
    <scope>VARIANT MCAHS3 LYS-184</scope>
</reference>
<reference key="27">
    <citation type="journal article" date="2019" name="Genet. Med.">
        <title>PIGT-CDG, a disorder of the glycosylphosphatidylinositol anchor: description of 13 novel patients and expansion of the clinical characteristics.</title>
        <authorList>
            <consortium name="DDD Study Group"/>
            <person name="Bayat A."/>
            <person name="Knaus A."/>
            <person name="Juul A.W."/>
            <person name="Dukic D."/>
            <person name="Gardella E."/>
            <person name="Charzewska A."/>
            <person name="Clement E."/>
            <person name="Hjalgrim H."/>
            <person name="Hoffman-Zacharska D."/>
            <person name="Horn D."/>
            <person name="Horton R."/>
            <person name="Hurst J.A."/>
            <person name="Josifova D."/>
            <person name="Larsen L.H.G."/>
            <person name="Lascelles K."/>
            <person name="Obersztyn E."/>
            <person name="Pagnamenta A."/>
            <person name="Pal D.K."/>
            <person name="Pendziwiat M."/>
            <person name="Ryten M."/>
            <person name="Taylor J."/>
            <person name="Vogt J."/>
            <person name="Weber Y."/>
            <person name="Krawitz P.M."/>
            <person name="Helbig I."/>
            <person name="Kini U."/>
            <person name="Moeller R.S."/>
        </authorList>
    </citation>
    <scope>VARIANTS MCAHS3 LYS-184; GLN-237; VAL-360; HIS-491 AND MET-528</scope>
</reference>
<reference key="28">
    <citation type="journal article" date="2019" name="Medicine (Baltimore)">
        <title>Case report of a child bearing a novel deleterious splicing variant in PIGT.</title>
        <authorList>
            <person name="Mason S."/>
            <person name="Castilla-Vallmanya L."/>
            <person name="James C."/>
            <person name="Andrews P.I."/>
            <person name="Balcells S."/>
            <person name="Grinberg D."/>
            <person name="Kirk E.P."/>
            <person name="Urreizti R."/>
        </authorList>
    </citation>
    <scope>VARIANT MCAHS3 PRO-183</scope>
</reference>
<reference key="29">
    <citation type="journal article" date="2020" name="BMC Med. Genomics">
        <title>Molecular diagnosis in recessive pediatric neurogenetic disease can help reduce disease recurrence in families.</title>
        <authorList>
            <person name="Issa M.Y."/>
            <person name="Chechlacz Z."/>
            <person name="Stanley V."/>
            <person name="George R.D."/>
            <person name="McEvoy-Venneri J."/>
            <person name="Belandres D."/>
            <person name="Elbendary H.M."/>
            <person name="Gaber K.R."/>
            <person name="Nabil A."/>
            <person name="Abdel-Hamid M.S."/>
            <person name="Zaki M.S."/>
            <person name="Gleeson J.G."/>
        </authorList>
    </citation>
    <scope>VARIANTS MCAHS3 139-CYS--LEU-578 DEL AND CYS-172</scope>
</reference>
<reference key="30">
    <citation type="journal article" date="2020" name="Clin. Genet.">
        <title>Evidence of the milder phenotypic spectrum of c.1582G&gt;A PIGT variant: Delineation based on seven novel Polish patients.</title>
        <authorList>
            <person name="Jezela-Stanek A."/>
            <person name="Szczepanik E."/>
            <person name="Mierzewska H."/>
            <person name="Rydzanicz M."/>
            <person name="Rutkowska K."/>
            <person name="Knaus A."/>
            <person name="Smigiel R."/>
            <person name="Stepniak I."/>
            <person name="Markiewicz M.G."/>
            <person name="Boniel S."/>
            <person name="Krawitz P."/>
            <person name="Ploski R."/>
        </authorList>
    </citation>
    <scope>VARIANTS MCAHS3 ARG-366; GLN-507 AND MET-528</scope>
</reference>
<reference key="31">
    <citation type="journal article" date="2020" name="Orphanet J. Rare Dis.">
        <title>Analyzing clinical and genetic characteristics of a cohort with multiple congenital anomalies-hypotonia-seizures syndrome (MCAHS).</title>
        <authorList>
            <person name="Jiao X."/>
            <person name="Xue J."/>
            <person name="Gong P."/>
            <person name="Bao X."/>
            <person name="Wu Y."/>
            <person name="Zhang Y."/>
            <person name="Jiang Y."/>
            <person name="Yang Z."/>
        </authorList>
    </citation>
    <scope>VARIANTS MCAHS3 VAL-157; CYS-172; ASP-374 AND HIS-527</scope>
</reference>
<reference key="32">
    <citation type="journal article" date="2021" name="Ann. Clin. Lab. Sci.">
        <title>Compound Heterozygous PIGT Mutations in Multiple Congenital Anomalies-Hypotonia-Seizures Syndrome: First Case in Korea and Characterization by Persistent Hypophosphatasia.</title>
        <authorList>
            <person name="Hur Y.J."/>
            <person name="Lee B.L."/>
            <person name="Chung W.Y."/>
            <person name="Yu S."/>
            <person name="Jun K.R."/>
            <person name="Oh S.H."/>
        </authorList>
    </citation>
    <scope>VARIANTS MCAHS3 84-GLU--LEU-578 DEL AND MET-528</scope>
</reference>
<reference key="33">
    <citation type="journal article" date="2021" name="Front. Genet.">
        <title>Deep-Phenotyping the Less Severe Spectrum of PIGT Deficiency and Linking the Gene to Myoclonic Atonic Seizures.</title>
        <authorList>
            <person name="Bayat A."/>
            <person name="Pendziwiat M."/>
            <person name="Obersztyn E."/>
            <person name="Goldenberg P."/>
            <person name="Zacher P."/>
            <person name="Doering J.H."/>
            <person name="Syrbe S."/>
            <person name="Begtrup A."/>
            <person name="Borovikov A."/>
            <person name="Sharkov A."/>
            <person name="Karasinska A."/>
            <person name="Gizewska M."/>
            <person name="Mitchell W."/>
            <person name="Morava E."/>
            <person name="Moeller R.S."/>
            <person name="Rubboli G."/>
        </authorList>
    </citation>
    <scope>VARIANTS MCAHS3 330-ARG--LEU-578 DEL; PRO-376; TRP-448; GLN-507; TRP-507; SER-527 AND MET-528</scope>
</reference>
<reference key="34">
    <citation type="journal article" date="2023" name="Front. Neurol.">
        <title>Case report: Functional analysis of the p.Arg507Trp variant of the PIGT gene supporting the moderate epilepsy phenotype of mutations in the C-terminal region.</title>
        <authorList>
            <person name="Ben Ayed I."/>
            <person name="Jallouli O."/>
            <person name="Murakami Y."/>
            <person name="Souissi A."/>
            <person name="Mallouli S."/>
            <person name="Bouzid A."/>
            <person name="Kamoun F."/>
            <person name="Elloumi I."/>
            <person name="Frikha F."/>
            <person name="Tlili A."/>
            <person name="Weckhuysen S."/>
            <person name="Kinoshita T."/>
            <person name="Triki C.C."/>
            <person name="Masmoudi S."/>
        </authorList>
    </citation>
    <scope>VARIANT MCAHS3 TRP-507</scope>
    <scope>CHARACTERIZATION OF VARIANT MCAHS3 TRP-507</scope>
    <scope>FUNCTION</scope>
    <scope>PATHWAY</scope>
</reference>
<keyword id="KW-0002">3D-structure</keyword>
<keyword id="KW-0025">Alternative splicing</keyword>
<keyword id="KW-0903">Direct protein sequencing</keyword>
<keyword id="KW-0225">Disease variant</keyword>
<keyword id="KW-1015">Disulfide bond</keyword>
<keyword id="KW-0256">Endoplasmic reticulum</keyword>
<keyword id="KW-0887">Epilepsy</keyword>
<keyword id="KW-0325">Glycoprotein</keyword>
<keyword id="KW-0337">GPI-anchor biosynthesis</keyword>
<keyword id="KW-0472">Membrane</keyword>
<keyword id="KW-1267">Proteomics identification</keyword>
<keyword id="KW-1185">Reference proteome</keyword>
<keyword id="KW-0732">Signal</keyword>
<keyword id="KW-0812">Transmembrane</keyword>
<keyword id="KW-1133">Transmembrane helix</keyword>
<gene>
    <name evidence="31" type="primary">PIGT</name>
    <name type="ORF">CGI-06</name>
    <name type="ORF">PSEC0163</name>
    <name type="ORF">UNQ716/PRO1379</name>
</gene>
<protein>
    <recommendedName>
        <fullName evidence="28">GPI-anchor transamidase component PIGT</fullName>
    </recommendedName>
    <alternativeName>
        <fullName>Phosphatidylinositol-glycan biosynthesis class T protein</fullName>
    </alternativeName>
</protein>
<name>PIGT_HUMAN</name>
<evidence type="ECO:0000255" key="1"/>
<evidence type="ECO:0000269" key="2">
    <source>
    </source>
</evidence>
<evidence type="ECO:0000269" key="3">
    <source>
    </source>
</evidence>
<evidence type="ECO:0000269" key="4">
    <source>
    </source>
</evidence>
<evidence type="ECO:0000269" key="5">
    <source>
    </source>
</evidence>
<evidence type="ECO:0000269" key="6">
    <source>
    </source>
</evidence>
<evidence type="ECO:0000269" key="7">
    <source>
    </source>
</evidence>
<evidence type="ECO:0000269" key="8">
    <source>
    </source>
</evidence>
<evidence type="ECO:0000269" key="9">
    <source>
    </source>
</evidence>
<evidence type="ECO:0000269" key="10">
    <source>
    </source>
</evidence>
<evidence type="ECO:0000269" key="11">
    <source>
    </source>
</evidence>
<evidence type="ECO:0000269" key="12">
    <source>
    </source>
</evidence>
<evidence type="ECO:0000269" key="13">
    <source>
    </source>
</evidence>
<evidence type="ECO:0000269" key="14">
    <source>
    </source>
</evidence>
<evidence type="ECO:0000269" key="15">
    <source>
    </source>
</evidence>
<evidence type="ECO:0000269" key="16">
    <source>
    </source>
</evidence>
<evidence type="ECO:0000269" key="17">
    <source>
    </source>
</evidence>
<evidence type="ECO:0000269" key="18">
    <source>
    </source>
</evidence>
<evidence type="ECO:0000269" key="19">
    <source>
    </source>
</evidence>
<evidence type="ECO:0000269" key="20">
    <source>
    </source>
</evidence>
<evidence type="ECO:0000269" key="21">
    <source>
    </source>
</evidence>
<evidence type="ECO:0000269" key="22">
    <source>
    </source>
</evidence>
<evidence type="ECO:0000269" key="23">
    <source>
    </source>
</evidence>
<evidence type="ECO:0000269" key="24">
    <source>
    </source>
</evidence>
<evidence type="ECO:0000303" key="25">
    <source>
    </source>
</evidence>
<evidence type="ECO:0000303" key="26">
    <source>
    </source>
</evidence>
<evidence type="ECO:0000303" key="27">
    <source ref="4"/>
</evidence>
<evidence type="ECO:0000305" key="28"/>
<evidence type="ECO:0000305" key="29">
    <source>
    </source>
</evidence>
<evidence type="ECO:0000305" key="30">
    <source>
    </source>
</evidence>
<evidence type="ECO:0000312" key="31">
    <source>
        <dbReference type="HGNC" id="HGNC:14938"/>
    </source>
</evidence>
<evidence type="ECO:0007744" key="32">
    <source>
        <dbReference type="PDB" id="7W72"/>
    </source>
</evidence>
<evidence type="ECO:0007744" key="33">
    <source>
        <dbReference type="PDB" id="7WLD"/>
    </source>
</evidence>
<evidence type="ECO:0007744" key="34">
    <source>
        <dbReference type="PDB" id="8IMX"/>
    </source>
</evidence>
<evidence type="ECO:0007744" key="35">
    <source>
        <dbReference type="PDB" id="8IMY"/>
    </source>
</evidence>
<evidence type="ECO:0007829" key="36">
    <source>
        <dbReference type="PDB" id="7W72"/>
    </source>
</evidence>
<evidence type="ECO:0007829" key="37">
    <source>
        <dbReference type="PDB" id="7WLD"/>
    </source>
</evidence>
<evidence type="ECO:0007829" key="38">
    <source>
        <dbReference type="PDB" id="8IMX"/>
    </source>
</evidence>
<evidence type="ECO:0007829" key="39">
    <source>
        <dbReference type="PDB" id="8IMY"/>
    </source>
</evidence>
<dbReference type="EMBL" id="AB057724">
    <property type="protein sequence ID" value="BAB60854.1"/>
    <property type="molecule type" value="mRNA"/>
</dbReference>
<dbReference type="EMBL" id="AK296139">
    <property type="protein sequence ID" value="BAH12267.1"/>
    <property type="molecule type" value="mRNA"/>
</dbReference>
<dbReference type="EMBL" id="AK302093">
    <property type="protein sequence ID" value="BAH13624.1"/>
    <property type="molecule type" value="mRNA"/>
</dbReference>
<dbReference type="EMBL" id="AK075469">
    <property type="protein sequence ID" value="BAC11639.1"/>
    <property type="molecule type" value="mRNA"/>
</dbReference>
<dbReference type="EMBL" id="AK225517">
    <property type="status" value="NOT_ANNOTATED_CDS"/>
    <property type="molecule type" value="mRNA"/>
</dbReference>
<dbReference type="EMBL" id="BX537612">
    <property type="protein sequence ID" value="CAD97799.1"/>
    <property type="molecule type" value="mRNA"/>
</dbReference>
<dbReference type="EMBL" id="AL121742">
    <property type="protein sequence ID" value="CAB57341.1"/>
    <property type="status" value="ALT_INIT"/>
    <property type="molecule type" value="mRNA"/>
</dbReference>
<dbReference type="EMBL" id="AL021578">
    <property type="status" value="NOT_ANNOTATED_CDS"/>
    <property type="molecule type" value="Genomic_DNA"/>
</dbReference>
<dbReference type="EMBL" id="CH471077">
    <property type="protein sequence ID" value="EAW75844.1"/>
    <property type="molecule type" value="Genomic_DNA"/>
</dbReference>
<dbReference type="EMBL" id="CH471077">
    <property type="protein sequence ID" value="EAW75845.1"/>
    <property type="molecule type" value="Genomic_DNA"/>
</dbReference>
<dbReference type="EMBL" id="CH471077">
    <property type="protein sequence ID" value="EAW75846.1"/>
    <property type="molecule type" value="Genomic_DNA"/>
</dbReference>
<dbReference type="EMBL" id="BC015022">
    <property type="protein sequence ID" value="AAH15022.3"/>
    <property type="molecule type" value="mRNA"/>
</dbReference>
<dbReference type="EMBL" id="BC110892">
    <property type="protein sequence ID" value="AAI10893.1"/>
    <property type="molecule type" value="mRNA"/>
</dbReference>
<dbReference type="EMBL" id="BC136827">
    <property type="protein sequence ID" value="AAI36828.1"/>
    <property type="molecule type" value="mRNA"/>
</dbReference>
<dbReference type="EMBL" id="BC136828">
    <property type="protein sequence ID" value="AAI36829.1"/>
    <property type="molecule type" value="mRNA"/>
</dbReference>
<dbReference type="EMBL" id="AY358588">
    <property type="protein sequence ID" value="AAQ88951.1"/>
    <property type="status" value="ALT_INIT"/>
    <property type="molecule type" value="mRNA"/>
</dbReference>
<dbReference type="EMBL" id="AF132940">
    <property type="protein sequence ID" value="AAD27715.1"/>
    <property type="status" value="ALT_FRAME"/>
    <property type="molecule type" value="mRNA"/>
</dbReference>
<dbReference type="CCDS" id="CCDS13353.1">
    <molecule id="Q969N2-1"/>
</dbReference>
<dbReference type="CCDS" id="CCDS54464.1">
    <molecule id="Q969N2-5"/>
</dbReference>
<dbReference type="CCDS" id="CCDS54465.1">
    <molecule id="Q969N2-6"/>
</dbReference>
<dbReference type="CCDS" id="CCDS54466.1">
    <molecule id="Q969N2-4"/>
</dbReference>
<dbReference type="RefSeq" id="NP_001171657.1">
    <molecule id="Q969N2-5"/>
    <property type="nucleotide sequence ID" value="NM_001184728.3"/>
</dbReference>
<dbReference type="RefSeq" id="NP_001171658.1">
    <molecule id="Q969N2-6"/>
    <property type="nucleotide sequence ID" value="NM_001184729.3"/>
</dbReference>
<dbReference type="RefSeq" id="NP_001171659.1">
    <molecule id="Q969N2-4"/>
    <property type="nucleotide sequence ID" value="NM_001184730.3"/>
</dbReference>
<dbReference type="RefSeq" id="NP_057021.2">
    <molecule id="Q969N2-1"/>
    <property type="nucleotide sequence ID" value="NM_015937.5"/>
</dbReference>
<dbReference type="PDB" id="7W72">
    <property type="method" value="EM"/>
    <property type="resolution" value="3.10 A"/>
    <property type="chains" value="T=27-552"/>
</dbReference>
<dbReference type="PDB" id="7WLD">
    <property type="method" value="EM"/>
    <property type="resolution" value="2.53 A"/>
    <property type="chains" value="T=2-578"/>
</dbReference>
<dbReference type="PDB" id="8IMX">
    <property type="method" value="EM"/>
    <property type="resolution" value="2.85 A"/>
    <property type="chains" value="T=2-578"/>
</dbReference>
<dbReference type="PDB" id="8IMY">
    <property type="method" value="EM"/>
    <property type="resolution" value="3.22 A"/>
    <property type="chains" value="T=2-578"/>
</dbReference>
<dbReference type="PDBsum" id="7W72"/>
<dbReference type="PDBsum" id="7WLD"/>
<dbReference type="PDBsum" id="8IMX"/>
<dbReference type="PDBsum" id="8IMY"/>
<dbReference type="EMDB" id="EMD-32336"/>
<dbReference type="EMDB" id="EMD-32582"/>
<dbReference type="SMR" id="Q969N2"/>
<dbReference type="BioGRID" id="119633">
    <property type="interactions" value="249"/>
</dbReference>
<dbReference type="ComplexPortal" id="CPX-6503">
    <property type="entry name" value="GPI-anchor transamidase complex"/>
</dbReference>
<dbReference type="CORUM" id="Q969N2"/>
<dbReference type="FunCoup" id="Q969N2">
    <property type="interactions" value="1193"/>
</dbReference>
<dbReference type="IntAct" id="Q969N2">
    <property type="interactions" value="176"/>
</dbReference>
<dbReference type="MINT" id="Q969N2"/>
<dbReference type="STRING" id="9606.ENSP00000279036"/>
<dbReference type="GlyConnect" id="1286">
    <property type="glycosylation" value="2 N-Linked glycans (1 site)"/>
</dbReference>
<dbReference type="GlyCosmos" id="Q969N2">
    <property type="glycosylation" value="3 sites, 2 glycans"/>
</dbReference>
<dbReference type="GlyGen" id="Q969N2">
    <property type="glycosylation" value="7 sites, 15 N-linked glycans (4 sites), 1 O-linked glycan (1 site)"/>
</dbReference>
<dbReference type="iPTMnet" id="Q969N2"/>
<dbReference type="PhosphoSitePlus" id="Q969N2"/>
<dbReference type="SwissPalm" id="Q969N2"/>
<dbReference type="BioMuta" id="PIGT"/>
<dbReference type="DMDM" id="44888284"/>
<dbReference type="CPTAC" id="CPTAC-1499"/>
<dbReference type="jPOST" id="Q969N2"/>
<dbReference type="MassIVE" id="Q969N2"/>
<dbReference type="PaxDb" id="9606-ENSP00000279036"/>
<dbReference type="PeptideAtlas" id="Q969N2"/>
<dbReference type="ProteomicsDB" id="34213"/>
<dbReference type="ProteomicsDB" id="75800">
    <molecule id="Q969N2-1"/>
</dbReference>
<dbReference type="ProteomicsDB" id="75801">
    <molecule id="Q969N2-2"/>
</dbReference>
<dbReference type="ProteomicsDB" id="75802">
    <molecule id="Q969N2-3"/>
</dbReference>
<dbReference type="ProteomicsDB" id="75803">
    <molecule id="Q969N2-4"/>
</dbReference>
<dbReference type="ProteomicsDB" id="75804">
    <molecule id="Q969N2-5"/>
</dbReference>
<dbReference type="Pumba" id="Q969N2"/>
<dbReference type="Antibodypedia" id="27619">
    <property type="antibodies" value="150 antibodies from 24 providers"/>
</dbReference>
<dbReference type="DNASU" id="51604"/>
<dbReference type="Ensembl" id="ENST00000279035.14">
    <molecule id="Q969N2-4"/>
    <property type="protein sequence ID" value="ENSP00000279035.8"/>
    <property type="gene ID" value="ENSG00000124155.19"/>
</dbReference>
<dbReference type="Ensembl" id="ENST00000279036.12">
    <molecule id="Q969N2-1"/>
    <property type="protein sequence ID" value="ENSP00000279036.6"/>
    <property type="gene ID" value="ENSG00000124155.19"/>
</dbReference>
<dbReference type="Ensembl" id="ENST00000372689.9">
    <molecule id="Q969N2-6"/>
    <property type="protein sequence ID" value="ENSP00000361774.4"/>
    <property type="gene ID" value="ENSG00000124155.19"/>
</dbReference>
<dbReference type="Ensembl" id="ENST00000543458.7">
    <molecule id="Q969N2-5"/>
    <property type="protein sequence ID" value="ENSP00000441577.1"/>
    <property type="gene ID" value="ENSG00000124155.19"/>
</dbReference>
<dbReference type="Ensembl" id="ENST00000545755.3">
    <molecule id="Q969N2-2"/>
    <property type="protein sequence ID" value="ENSP00000443963.3"/>
    <property type="gene ID" value="ENSG00000124155.19"/>
</dbReference>
<dbReference type="GeneID" id="51604"/>
<dbReference type="KEGG" id="hsa:51604"/>
<dbReference type="MANE-Select" id="ENST00000279036.12">
    <property type="protein sequence ID" value="ENSP00000279036.6"/>
    <property type="RefSeq nucleotide sequence ID" value="NM_015937.6"/>
    <property type="RefSeq protein sequence ID" value="NP_057021.2"/>
</dbReference>
<dbReference type="UCSC" id="uc002xoh.4">
    <molecule id="Q969N2-1"/>
    <property type="organism name" value="human"/>
</dbReference>
<dbReference type="AGR" id="HGNC:14938"/>
<dbReference type="CTD" id="51604"/>
<dbReference type="DisGeNET" id="51604"/>
<dbReference type="GeneCards" id="PIGT"/>
<dbReference type="HGNC" id="HGNC:14938">
    <property type="gene designation" value="PIGT"/>
</dbReference>
<dbReference type="HPA" id="ENSG00000124155">
    <property type="expression patterns" value="Low tissue specificity"/>
</dbReference>
<dbReference type="MalaCards" id="PIGT"/>
<dbReference type="MIM" id="610272">
    <property type="type" value="gene"/>
</dbReference>
<dbReference type="MIM" id="615398">
    <property type="type" value="phenotype"/>
</dbReference>
<dbReference type="MIM" id="615399">
    <property type="type" value="phenotype"/>
</dbReference>
<dbReference type="neXtProt" id="NX_Q969N2"/>
<dbReference type="OpenTargets" id="ENSG00000124155"/>
<dbReference type="Orphanet" id="369837">
    <property type="disease" value="Intellectual disability-seizures-hypophosphatasia-ophthalmic-skeletal anomalies syndrome"/>
</dbReference>
<dbReference type="PharmGKB" id="PA33302"/>
<dbReference type="VEuPathDB" id="HostDB:ENSG00000124155"/>
<dbReference type="eggNOG" id="KOG2407">
    <property type="taxonomic scope" value="Eukaryota"/>
</dbReference>
<dbReference type="GeneTree" id="ENSGT00390000018558"/>
<dbReference type="HOGENOM" id="CLU_021459_0_1_1"/>
<dbReference type="InParanoid" id="Q969N2"/>
<dbReference type="OMA" id="NHGHYIG"/>
<dbReference type="OrthoDB" id="331263at2759"/>
<dbReference type="PAN-GO" id="Q969N2">
    <property type="GO annotations" value="2 GO annotations based on evolutionary models"/>
</dbReference>
<dbReference type="PhylomeDB" id="Q969N2"/>
<dbReference type="TreeFam" id="TF105921"/>
<dbReference type="PathwayCommons" id="Q969N2"/>
<dbReference type="Reactome" id="R-HSA-162791">
    <property type="pathway name" value="Attachment of GPI anchor to uPAR"/>
</dbReference>
<dbReference type="SignaLink" id="Q969N2"/>
<dbReference type="UniPathway" id="UPA00196"/>
<dbReference type="BioGRID-ORCS" id="51604">
    <property type="hits" value="18 hits in 1157 CRISPR screens"/>
</dbReference>
<dbReference type="ChiTaRS" id="PIGT">
    <property type="organism name" value="human"/>
</dbReference>
<dbReference type="GeneWiki" id="PIGT"/>
<dbReference type="GenomeRNAi" id="51604"/>
<dbReference type="Pharos" id="Q969N2">
    <property type="development level" value="Tbio"/>
</dbReference>
<dbReference type="PRO" id="PR:Q969N2"/>
<dbReference type="Proteomes" id="UP000005640">
    <property type="component" value="Chromosome 20"/>
</dbReference>
<dbReference type="RNAct" id="Q969N2">
    <property type="molecule type" value="protein"/>
</dbReference>
<dbReference type="Bgee" id="ENSG00000124155">
    <property type="expression patterns" value="Expressed in cardia of stomach and 180 other cell types or tissues"/>
</dbReference>
<dbReference type="ExpressionAtlas" id="Q969N2">
    <property type="expression patterns" value="baseline and differential"/>
</dbReference>
<dbReference type="GO" id="GO:0031410">
    <property type="term" value="C:cytoplasmic vesicle"/>
    <property type="evidence" value="ECO:0007669"/>
    <property type="project" value="Ensembl"/>
</dbReference>
<dbReference type="GO" id="GO:0005789">
    <property type="term" value="C:endoplasmic reticulum membrane"/>
    <property type="evidence" value="ECO:0000304"/>
    <property type="project" value="Reactome"/>
</dbReference>
<dbReference type="GO" id="GO:0042765">
    <property type="term" value="C:GPI-anchor transamidase complex"/>
    <property type="evidence" value="ECO:0000314"/>
    <property type="project" value="UniProtKB"/>
</dbReference>
<dbReference type="GO" id="GO:0016020">
    <property type="term" value="C:membrane"/>
    <property type="evidence" value="ECO:0007005"/>
    <property type="project" value="UniProtKB"/>
</dbReference>
<dbReference type="GO" id="GO:0034235">
    <property type="term" value="F:GPI anchor binding"/>
    <property type="evidence" value="ECO:0000314"/>
    <property type="project" value="UniProtKB"/>
</dbReference>
<dbReference type="GO" id="GO:0016255">
    <property type="term" value="P:attachment of GPI anchor to protein"/>
    <property type="evidence" value="ECO:0000314"/>
    <property type="project" value="UniProtKB"/>
</dbReference>
<dbReference type="GO" id="GO:0006506">
    <property type="term" value="P:GPI anchor biosynthetic process"/>
    <property type="evidence" value="ECO:0007669"/>
    <property type="project" value="UniProtKB-UniPathway"/>
</dbReference>
<dbReference type="GO" id="GO:0180046">
    <property type="term" value="P:GPI anchored protein biosynthesis"/>
    <property type="evidence" value="ECO:0000314"/>
    <property type="project" value="UniProtKB"/>
</dbReference>
<dbReference type="GO" id="GO:0051402">
    <property type="term" value="P:neuron apoptotic process"/>
    <property type="evidence" value="ECO:0007669"/>
    <property type="project" value="Ensembl"/>
</dbReference>
<dbReference type="GO" id="GO:0030182">
    <property type="term" value="P:neuron differentiation"/>
    <property type="evidence" value="ECO:0007669"/>
    <property type="project" value="Ensembl"/>
</dbReference>
<dbReference type="InterPro" id="IPR007245">
    <property type="entry name" value="PIG-T"/>
</dbReference>
<dbReference type="PANTHER" id="PTHR12959:SF11">
    <property type="entry name" value="GPI TRANSAMIDASE COMPONENT PIG-T"/>
    <property type="match status" value="1"/>
</dbReference>
<dbReference type="PANTHER" id="PTHR12959">
    <property type="entry name" value="GPI TRANSAMIDASE COMPONENT PIG-T-RELATED"/>
    <property type="match status" value="1"/>
</dbReference>
<dbReference type="Pfam" id="PF04113">
    <property type="entry name" value="Gpi16"/>
    <property type="match status" value="2"/>
</dbReference>
<sequence length="578" mass="65700">MAAAMPLALLVLLLLGPGGWCLAEPPRDSLREELVITPLPSGDVAATFQFRTRWDSELQREGVSHYRLFPKALGQLISKYSLRELHLSFTQGFWRTRYWGPPFLQAPSGAELWVWFQDTVTDVDKSWKELSNVLSGIFCASLNFIDSTNTVTPTASFKPLGLANDTDHYFLRYAVLPREVVCTENLTPWKKLLPCSSKAGLSVLLKADRLFHTSYHSQAVHIRPVCRNARCTSISWELRQTLSVVFDAFITGQGKKDWSLFRMFSRTLTEPCPLASESRVYVDITTYNQDNETLEVHPPPTTTYQDVILGTRKTYAIYDLLDTAMINNSRNLNIQLKWKRPPENEAPPVPFLHAQRYVSGYGLQKGELSTLLYNTHPYRAFPVLLLDTVPWYLRLYVHTLTITSKGKENKPSYIHYQPAQDRLQPHLLEMLIQLPANSVTKVSIQFERALLKWTEYTPDPNHGFYVSPSVLSALVPSMVAAKPVDWEESPLFNSLFPVSDGSNYFVRLYTEPLLVNLPTPDFSMPYNVICLTCTVVAVCYGSFYNLLTRTFHIEEPRTGGLAKRLANLIRRARGVPPL</sequence>
<proteinExistence type="evidence at protein level"/>
<feature type="signal peptide" evidence="2">
    <location>
        <begin position="1"/>
        <end position="21"/>
    </location>
</feature>
<feature type="chain" id="PRO_0000024107" description="GPI-anchor transamidase component PIGT">
    <location>
        <begin position="22"/>
        <end position="578"/>
    </location>
</feature>
<feature type="topological domain" description="Lumenal" evidence="30 33">
    <location>
        <begin position="22"/>
        <end position="525"/>
    </location>
</feature>
<feature type="transmembrane region" description="Helical" evidence="21 22 32 33">
    <location>
        <begin position="526"/>
        <end position="548"/>
    </location>
</feature>
<feature type="topological domain" description="Cytoplasmic" evidence="30 33">
    <location>
        <begin position="549"/>
        <end position="578"/>
    </location>
</feature>
<feature type="binding site" evidence="22 33">
    <location>
        <position position="461"/>
    </location>
    <ligand>
        <name>a 2-acyl-6-[6-phosphoethanolamine-alpha-D-mannosyl-(1-&gt;2)-6-phosphoethanolamine-alpha-D-mannosyl-(1-&gt;6)-2-phosphoethanolamine-alpha-D-mannosyl-(1-&gt;4)-alpha-D-glucosaminyl]-1-(1-radyl,2-acyl-sn-glycero-3-phospho)-1D-myo-inositol</name>
        <dbReference type="ChEBI" id="CHEBI:144080"/>
    </ligand>
</feature>
<feature type="binding site" evidence="22 24 33 35">
    <location>
        <position position="521"/>
    </location>
    <ligand>
        <name>a 2-acyl-6-[6-phosphoethanolamine-alpha-D-mannosyl-(1-&gt;2)-6-phosphoethanolamine-alpha-D-mannosyl-(1-&gt;6)-2-phosphoethanolamine-alpha-D-mannosyl-(1-&gt;4)-alpha-D-glucosaminyl]-1-(1-radyl,2-acyl-sn-glycero-3-phospho)-1D-myo-inositol</name>
        <dbReference type="ChEBI" id="CHEBI:144080"/>
    </ligand>
</feature>
<feature type="binding site" evidence="21 22 24 32 33 34 35">
    <location>
        <position position="523"/>
    </location>
    <ligand>
        <name>a 2-acyl-6-[6-phosphoethanolamine-alpha-D-mannosyl-(1-&gt;2)-6-phosphoethanolamine-alpha-D-mannosyl-(1-&gt;6)-2-phosphoethanolamine-alpha-D-mannosyl-(1-&gt;4)-alpha-D-glucosaminyl]-1-(1-radyl,2-acyl-sn-glycero-3-phospho)-1D-myo-inositol</name>
        <dbReference type="ChEBI" id="CHEBI:144080"/>
    </ligand>
</feature>
<feature type="binding site" evidence="24 34">
    <location>
        <position position="527"/>
    </location>
    <ligand>
        <name>a 2-acyl-6-[6-phosphoethanolamine-alpha-D-mannosyl-(1-&gt;2)-6-phosphoethanolamine-alpha-D-mannosyl-(1-&gt;6)-2-phosphoethanolamine-alpha-D-mannosyl-(1-&gt;4)-alpha-D-glucosaminyl]-1-(1-radyl,2-acyl-sn-glycero-3-phospho)-1D-myo-inositol</name>
        <dbReference type="ChEBI" id="CHEBI:144080"/>
    </ligand>
</feature>
<feature type="glycosylation site" description="N-linked (GlcNAc...) asparagine" evidence="4">
    <location>
        <position position="164"/>
    </location>
</feature>
<feature type="glycosylation site" description="N-linked (GlcNAc...) asparagine" evidence="1">
    <location>
        <position position="291"/>
    </location>
</feature>
<feature type="glycosylation site" description="N-linked (GlcNAc...) asparagine" evidence="22 24 33 34 35">
    <location>
        <position position="327"/>
    </location>
</feature>
<feature type="disulfide bond" description="Interchain (with C-92 in PIGK/GPI8)" evidence="3 21 22 24 32 33 34 35">
    <location>
        <position position="182"/>
    </location>
</feature>
<feature type="disulfide bond" evidence="21 22 24 32 33 34 35">
    <location>
        <begin position="195"/>
        <end position="272"/>
    </location>
</feature>
<feature type="disulfide bond" evidence="21 22 24 32 33 34 35">
    <location>
        <begin position="226"/>
        <end position="231"/>
    </location>
</feature>
<feature type="splice variant" id="VSP_009536" description="In isoform 3." evidence="26">
    <location>
        <begin position="1"/>
        <end position="144"/>
    </location>
</feature>
<feature type="splice variant" id="VSP_009537" description="In isoform 2." evidence="28">
    <location>
        <begin position="63"/>
        <end position="256"/>
    </location>
</feature>
<feature type="splice variant" id="VSP_009538" description="In isoform 4." evidence="25">
    <location>
        <begin position="63"/>
        <end position="164"/>
    </location>
</feature>
<feature type="splice variant" id="VSP_043167" description="In isoform 5." evidence="25">
    <location>
        <begin position="109"/>
        <end position="164"/>
    </location>
</feature>
<feature type="splice variant" id="VSP_009539" description="In isoform 3." evidence="26">
    <original>IDSTNTVTPTASFKPLGLAN</original>
    <variation>MWIPRGQSPRPTPDRPLSPS</variation>
    <location>
        <begin position="145"/>
        <end position="164"/>
    </location>
</feature>
<feature type="splice variant" id="VSP_009540" description="In isoform 3 and isoform 6." evidence="26 27">
    <original>EAPPVPFLHAQRYVSGYGLQKGELSTLLYNTHPYRAFPVLLLDTVPWYLRLYVHTLTITSKGKENKPS</original>
    <variation>G</variation>
    <location>
        <begin position="345"/>
        <end position="412"/>
    </location>
</feature>
<feature type="sequence variant" id="VAR_088155" description="In MCAHS3; loss of function in GPI-anchor attachment to protein." evidence="7 11 19">
    <location>
        <begin position="84"/>
        <end position="578"/>
    </location>
</feature>
<feature type="sequence variant" id="VAR_088156" description="In MCAHS3." evidence="16">
    <location>
        <begin position="139"/>
        <end position="578"/>
    </location>
</feature>
<feature type="sequence variant" id="VAR_088157" description="In MCAHS3; uncertain significance." evidence="15">
    <original>F</original>
    <variation>V</variation>
    <location>
        <position position="157"/>
    </location>
</feature>
<feature type="sequence variant" id="VAR_088158" description="In MCAHS3; dbSNP:rs778531326." evidence="15 16">
    <original>R</original>
    <variation>C</variation>
    <location>
        <position position="172"/>
    </location>
</feature>
<feature type="sequence variant" id="VAR_070448" description="In MCAHS3; decreased function in GPI-anchor attachment to protein; flow cytometric analysis of patient granulocytes and monocytes show decreased amounts of GPI-anchored proteins CD16B and CD59 compared to controls; dbSNP:rs587777027." evidence="5 13">
    <original>T</original>
    <variation>P</variation>
    <location>
        <position position="183"/>
    </location>
</feature>
<feature type="sequence variant" id="VAR_088159" description="In MCAHS3; decreased function in GPI-anchor attachment to protein; reduced amounts of GPI-anchored proteins in homozygous patient cells; dbSNP:rs774753616." evidence="12 14">
    <original>E</original>
    <variation>K</variation>
    <location>
        <position position="184"/>
    </location>
</feature>
<feature type="sequence variant" id="VAR_088160" description="In MCAHS3; decreased function in GPI-anchor attachment to protein; does not rescue GPI-anchored CD59 surface expression as efficiently as the wild-type in PIGT-knockout cells; dbSNP:rs768580788." evidence="10 14">
    <original>E</original>
    <variation>Q</variation>
    <location>
        <position position="237"/>
    </location>
</feature>
<feature type="sequence variant" id="VAR_088161" description="In MCAHS3." evidence="18">
    <location>
        <begin position="330"/>
        <end position="578"/>
    </location>
</feature>
<feature type="sequence variant" id="VAR_088162" description="In MCAHS3; decreased function in GPI-anchor attachment to protein; reduced amounts of GPI-anchored proteins in homozygous patient cells; dbSNP:rs1277383877." evidence="9 14">
    <original>G</original>
    <variation>V</variation>
    <location>
        <position position="360"/>
    </location>
</feature>
<feature type="sequence variant" id="VAR_088163" description="In MCAHS3; dbSNP:rs571714796." evidence="17">
    <original>G</original>
    <variation>R</variation>
    <location>
        <position position="366"/>
    </location>
</feature>
<feature type="sequence variant" id="VAR_088164" description="In MCAHS3; dbSNP:rs571714796." evidence="11">
    <original>G</original>
    <variation>W</variation>
    <location>
        <position position="366"/>
    </location>
</feature>
<feature type="sequence variant" id="VAR_088165" description="In MCAHS3; uncertain significance; dbSNP:rs1158318050." evidence="15">
    <original>N</original>
    <variation>D</variation>
    <location>
        <position position="374"/>
    </location>
</feature>
<feature type="sequence variant" id="VAR_088166" description="In MCAHS3; uncertain significance; dbSNP:rs779442458." evidence="18">
    <original>H</original>
    <variation>P</variation>
    <location>
        <position position="376"/>
    </location>
</feature>
<feature type="sequence variant" id="VAR_088167" description="In MCAHS3; decreased function in GPI-anchor attachment to protein; dbSNP:rs527236031." evidence="7 8 18">
    <original>R</original>
    <variation>W</variation>
    <location>
        <position position="448"/>
    </location>
</feature>
<feature type="sequence variant" id="VAR_053583" description="In dbSNP:rs36056071.">
    <original>A</original>
    <variation>T</variation>
    <location>
        <position position="473"/>
    </location>
</feature>
<feature type="sequence variant" id="VAR_088168" description="In MCAHS3; uncertain significance; dbSNP:rs1399044711." evidence="14">
    <original>L</original>
    <variation>H</variation>
    <location>
        <position position="491"/>
    </location>
</feature>
<feature type="sequence variant" id="VAR_088169" description="In MCAHS3; dbSNP:rs769195904." evidence="17 18">
    <original>R</original>
    <variation>Q</variation>
    <location>
        <position position="507"/>
    </location>
</feature>
<feature type="sequence variant" id="VAR_088170" description="In MCAHS3; decreased function in GPI-anchor attachment to protein; does not rescue GPI-anchored proteins surface expression as efficiently as the wild-type in PIGT-knockout cells; dbSNP:rs146484791." evidence="18 23">
    <original>R</original>
    <variation>W</variation>
    <location>
        <position position="507"/>
    </location>
</feature>
<feature type="sequence variant" id="VAR_088171" description="In MCAHS3; uncertain significance; dbSNP:rs199800874." evidence="15">
    <original>N</original>
    <variation>H</variation>
    <location>
        <position position="527"/>
    </location>
</feature>
<feature type="sequence variant" id="VAR_088172" description="In MCAHS3; uncertain significance; dbSNP:rs1232400537." evidence="18">
    <original>N</original>
    <variation>S</variation>
    <location>
        <position position="527"/>
    </location>
</feature>
<feature type="sequence variant" id="VAR_088173" description="In MCAHS3; decreased function in GPI-anchor attachment to protein; does not rescue GPI-anchored CD59 surface expression as efficiently as the wild-type in PIGT-knockout cells; dbSNP:rs771157170." evidence="10 14 17 18 19">
    <original>V</original>
    <variation>M</variation>
    <location>
        <position position="528"/>
    </location>
</feature>
<feature type="mutagenesis site" description="No effect on function in GPI-anchor attachment to protein." evidence="20">
    <original>P</original>
    <variation>A</variation>
    <location>
        <position position="38"/>
    </location>
</feature>
<feature type="mutagenesis site" description="No effect on function in GPI-anchor attachment to protein." evidence="20">
    <original>G</original>
    <variation>A</variation>
    <location>
        <position position="92"/>
    </location>
</feature>
<feature type="mutagenesis site" description="No effect on function in GPI-anchor attachment to protein." evidence="20">
    <original>E</original>
    <variation>A</variation>
    <location>
        <position position="129"/>
    </location>
</feature>
<feature type="mutagenesis site" description="No effect on function in GPI-anchor attachment to protein." evidence="20">
    <original>SG</original>
    <variation>AA</variation>
    <location>
        <begin position="135"/>
        <end position="136"/>
    </location>
</feature>
<feature type="mutagenesis site" description="No effect on function in GPI-anchor attachment to protein." evidence="20">
    <original>C</original>
    <variation>A</variation>
    <location>
        <position position="139"/>
    </location>
</feature>
<feature type="mutagenesis site" description="No effect on function in GPI-anchor attachment to protein." evidence="20">
    <original>D</original>
    <variation>A</variation>
    <location>
        <position position="146"/>
    </location>
</feature>
<feature type="mutagenesis site" description="No effect on function in GPI-anchor attachment to protein." evidence="20">
    <original>N</original>
    <variation>Q</variation>
    <location>
        <position position="164"/>
    </location>
</feature>
<feature type="mutagenesis site" description="Decreased function in GPI-anchor attachment to protein." evidence="3 20">
    <original>C</original>
    <variation>S</variation>
    <location>
        <position position="182"/>
    </location>
</feature>
<feature type="mutagenesis site" description="No effect on function in GPI-anchor attachment to protein." evidence="20">
    <original>E</original>
    <variation>A</variation>
    <location>
        <position position="184"/>
    </location>
</feature>
<feature type="mutagenesis site" description="No effect on function in GPI-anchor attachment to protein." evidence="20">
    <original>KK</original>
    <variation>AA</variation>
    <location>
        <begin position="190"/>
        <end position="191"/>
    </location>
</feature>
<feature type="mutagenesis site" description="No effect on function in GPI-anchor attachment to protein." evidence="20">
    <original>N</original>
    <variation>Q</variation>
    <location>
        <position position="291"/>
    </location>
</feature>
<feature type="mutagenesis site" description="No effect on function in GPI-anchor attachment to protein." evidence="20">
    <original>N</original>
    <variation>Q</variation>
    <location>
        <position position="327"/>
    </location>
</feature>
<feature type="mutagenesis site" description="No effect on function in GPI-anchor attachment to protein." evidence="20">
    <original>Y</original>
    <variation>A</variation>
    <location>
        <position position="396"/>
    </location>
</feature>
<feature type="mutagenesis site" description="Decreased function in GPI-anchor attachment to protein." evidence="20">
    <original>E</original>
    <variation>A</variation>
    <location>
        <position position="429"/>
    </location>
</feature>
<feature type="mutagenesis site" description="No effect on function in GPI-anchor attachment to protein." evidence="20">
    <original>E</original>
    <variation>A</variation>
    <location>
        <position position="455"/>
    </location>
</feature>
<feature type="mutagenesis site" description="No effect on function in GPI-anchor attachment to protein." evidence="20">
    <original>D</original>
    <variation>A</variation>
    <location>
        <position position="459"/>
    </location>
</feature>
<feature type="mutagenesis site" description="Decreases the GPI-anchor transamidase activity to 28.9%,." evidence="22">
    <original>D</original>
    <variation>A</variation>
    <location>
        <position position="521"/>
    </location>
</feature>
<feature type="mutagenesis site" description="Decreases the GPI-anchor transamidase activity to 18.8%. Almost abolishes the GPI-anchor transamidase activity to 6.2%; when associated with F-523." evidence="22">
    <original>D</original>
    <variation>L</variation>
    <location>
        <position position="521"/>
    </location>
</feature>
<feature type="mutagenesis site" description="Decreases the GPI-anchor transamidase activity to 76.5% Almost abolishes the GPI-anchor transamidase activity to 6.2%; when associated with L-521." evidence="22">
    <original>S</original>
    <variation>F</variation>
    <location>
        <position position="523"/>
    </location>
</feature>
<feature type="mutagenesis site" description="Decreases the GPI-anchor transamidase activity to 76.8%." evidence="22">
    <original>S</original>
    <variation>W</variation>
    <location>
        <position position="523"/>
    </location>
</feature>
<feature type="mutagenesis site" description="No effect on function in GPI-anchor attachment to protein." evidence="20">
    <original>VI</original>
    <variation>AA</variation>
    <location>
        <begin position="528"/>
        <end position="529"/>
    </location>
</feature>
<feature type="strand" evidence="37">
    <location>
        <begin position="27"/>
        <end position="38"/>
    </location>
</feature>
<feature type="strand" evidence="37">
    <location>
        <begin position="44"/>
        <end position="54"/>
    </location>
</feature>
<feature type="strand" evidence="37">
    <location>
        <begin position="65"/>
        <end position="69"/>
    </location>
</feature>
<feature type="helix" evidence="37">
    <location>
        <begin position="71"/>
        <end position="74"/>
    </location>
</feature>
<feature type="helix" evidence="37">
    <location>
        <begin position="76"/>
        <end position="79"/>
    </location>
</feature>
<feature type="strand" evidence="37">
    <location>
        <begin position="82"/>
        <end position="92"/>
    </location>
</feature>
<feature type="helix" evidence="37">
    <location>
        <begin position="96"/>
        <end position="99"/>
    </location>
</feature>
<feature type="strand" evidence="37">
    <location>
        <begin position="108"/>
        <end position="116"/>
    </location>
</feature>
<feature type="helix" evidence="37">
    <location>
        <begin position="123"/>
        <end position="138"/>
    </location>
</feature>
<feature type="helix" evidence="37">
    <location>
        <begin position="142"/>
        <end position="144"/>
    </location>
</feature>
<feature type="helix" evidence="37">
    <location>
        <begin position="147"/>
        <end position="149"/>
    </location>
</feature>
<feature type="strand" evidence="37">
    <location>
        <begin position="154"/>
        <end position="157"/>
    </location>
</feature>
<feature type="strand" evidence="37">
    <location>
        <begin position="160"/>
        <end position="162"/>
    </location>
</feature>
<feature type="helix" evidence="37">
    <location>
        <begin position="168"/>
        <end position="170"/>
    </location>
</feature>
<feature type="strand" evidence="37">
    <location>
        <begin position="171"/>
        <end position="176"/>
    </location>
</feature>
<feature type="helix" evidence="37">
    <location>
        <begin position="183"/>
        <end position="191"/>
    </location>
</feature>
<feature type="strand" evidence="37">
    <location>
        <begin position="193"/>
        <end position="195"/>
    </location>
</feature>
<feature type="strand" evidence="36">
    <location>
        <begin position="197"/>
        <end position="199"/>
    </location>
</feature>
<feature type="helix" evidence="37">
    <location>
        <begin position="200"/>
        <end position="204"/>
    </location>
</feature>
<feature type="helix" evidence="37">
    <location>
        <begin position="207"/>
        <end position="210"/>
    </location>
</feature>
<feature type="strand" evidence="37">
    <location>
        <begin position="212"/>
        <end position="230"/>
    </location>
</feature>
<feature type="strand" evidence="37">
    <location>
        <begin position="233"/>
        <end position="246"/>
    </location>
</feature>
<feature type="turn" evidence="37">
    <location>
        <begin position="248"/>
        <end position="250"/>
    </location>
</feature>
<feature type="strand" evidence="37">
    <location>
        <begin position="254"/>
        <end position="256"/>
    </location>
</feature>
<feature type="helix" evidence="37">
    <location>
        <begin position="260"/>
        <end position="264"/>
    </location>
</feature>
<feature type="strand" evidence="37">
    <location>
        <begin position="276"/>
        <end position="283"/>
    </location>
</feature>
<feature type="strand" evidence="37">
    <location>
        <begin position="287"/>
        <end position="291"/>
    </location>
</feature>
<feature type="strand" evidence="37">
    <location>
        <begin position="296"/>
        <end position="298"/>
    </location>
</feature>
<feature type="strand" evidence="37">
    <location>
        <begin position="301"/>
        <end position="307"/>
    </location>
</feature>
<feature type="strand" evidence="37">
    <location>
        <begin position="309"/>
        <end position="319"/>
    </location>
</feature>
<feature type="turn" evidence="37">
    <location>
        <begin position="323"/>
        <end position="325"/>
    </location>
</feature>
<feature type="strand" evidence="39">
    <location>
        <begin position="328"/>
        <end position="330"/>
    </location>
</feature>
<feature type="turn" evidence="38">
    <location>
        <begin position="343"/>
        <end position="345"/>
    </location>
</feature>
<feature type="strand" evidence="37">
    <location>
        <begin position="351"/>
        <end position="359"/>
    </location>
</feature>
<feature type="strand" evidence="37">
    <location>
        <begin position="362"/>
        <end position="374"/>
    </location>
</feature>
<feature type="strand" evidence="37">
    <location>
        <begin position="381"/>
        <end position="389"/>
    </location>
</feature>
<feature type="strand" evidence="37">
    <location>
        <begin position="393"/>
        <end position="404"/>
    </location>
</feature>
<feature type="strand" evidence="37">
    <location>
        <begin position="412"/>
        <end position="417"/>
    </location>
</feature>
<feature type="turn" evidence="37">
    <location>
        <begin position="421"/>
        <end position="423"/>
    </location>
</feature>
<feature type="strand" evidence="37">
    <location>
        <begin position="426"/>
        <end position="434"/>
    </location>
</feature>
<feature type="strand" evidence="37">
    <location>
        <begin position="436"/>
        <end position="447"/>
    </location>
</feature>
<feature type="helix" evidence="36">
    <location>
        <begin position="453"/>
        <end position="455"/>
    </location>
</feature>
<feature type="turn" evidence="38">
    <location>
        <begin position="460"/>
        <end position="462"/>
    </location>
</feature>
<feature type="strand" evidence="37">
    <location>
        <begin position="464"/>
        <end position="466"/>
    </location>
</feature>
<feature type="strand" evidence="37">
    <location>
        <begin position="470"/>
        <end position="476"/>
    </location>
</feature>
<feature type="turn" evidence="36">
    <location>
        <begin position="486"/>
        <end position="488"/>
    </location>
</feature>
<feature type="helix" evidence="37">
    <location>
        <begin position="491"/>
        <end position="493"/>
    </location>
</feature>
<feature type="strand" evidence="38">
    <location>
        <begin position="494"/>
        <end position="496"/>
    </location>
</feature>
<feature type="strand" evidence="37">
    <location>
        <begin position="503"/>
        <end position="509"/>
    </location>
</feature>
<feature type="strand" evidence="37">
    <location>
        <begin position="513"/>
        <end position="515"/>
    </location>
</feature>
<feature type="helix" evidence="37">
    <location>
        <begin position="527"/>
        <end position="548"/>
    </location>
</feature>